<proteinExistence type="evidence at protein level"/>
<protein>
    <recommendedName>
        <fullName>Ethylene-responsive transcription factor ERF122</fullName>
    </recommendedName>
</protein>
<dbReference type="EMBL" id="DQ145775">
    <property type="protein sequence ID" value="ABB02372.1"/>
    <property type="molecule type" value="mRNA"/>
</dbReference>
<dbReference type="EMBL" id="AB026640">
    <property type="protein sequence ID" value="BAB08939.1"/>
    <property type="status" value="ALT_INIT"/>
    <property type="molecule type" value="Genomic_DNA"/>
</dbReference>
<dbReference type="EMBL" id="CP002688">
    <property type="protein sequence ID" value="AED98289.1"/>
    <property type="molecule type" value="Genomic_DNA"/>
</dbReference>
<dbReference type="EMBL" id="AY560859">
    <property type="protein sequence ID" value="AAT44926.1"/>
    <property type="molecule type" value="mRNA"/>
</dbReference>
<dbReference type="EMBL" id="BT024702">
    <property type="protein sequence ID" value="ABD57527.1"/>
    <property type="molecule type" value="mRNA"/>
</dbReference>
<dbReference type="RefSeq" id="NP_201501.2">
    <property type="nucleotide sequence ID" value="NM_126100.2"/>
</dbReference>
<dbReference type="SMR" id="Q38Q40"/>
<dbReference type="BioGRID" id="22077">
    <property type="interactions" value="2"/>
</dbReference>
<dbReference type="IntAct" id="Q38Q40">
    <property type="interactions" value="4"/>
</dbReference>
<dbReference type="iPTMnet" id="Q38Q40"/>
<dbReference type="PaxDb" id="3702-AT5G67000.1"/>
<dbReference type="EnsemblPlants" id="AT5G67000.1">
    <property type="protein sequence ID" value="AT5G67000.1"/>
    <property type="gene ID" value="AT5G67000"/>
</dbReference>
<dbReference type="GeneID" id="836835"/>
<dbReference type="Gramene" id="AT5G67000.1">
    <property type="protein sequence ID" value="AT5G67000.1"/>
    <property type="gene ID" value="AT5G67000"/>
</dbReference>
<dbReference type="KEGG" id="ath:AT5G67000"/>
<dbReference type="Araport" id="AT5G67000"/>
<dbReference type="TAIR" id="AT5G67000"/>
<dbReference type="HOGENOM" id="CLU_1637728_0_0_1"/>
<dbReference type="InParanoid" id="Q38Q40"/>
<dbReference type="OMA" id="VIPFLDC"/>
<dbReference type="PhylomeDB" id="Q38Q40"/>
<dbReference type="PRO" id="PR:Q38Q40"/>
<dbReference type="Proteomes" id="UP000006548">
    <property type="component" value="Chromosome 5"/>
</dbReference>
<dbReference type="ExpressionAtlas" id="Q38Q40">
    <property type="expression patterns" value="baseline and differential"/>
</dbReference>
<dbReference type="GO" id="GO:0005634">
    <property type="term" value="C:nucleus"/>
    <property type="evidence" value="ECO:0007669"/>
    <property type="project" value="UniProtKB-SubCell"/>
</dbReference>
<dbReference type="GO" id="GO:0003677">
    <property type="term" value="F:DNA binding"/>
    <property type="evidence" value="ECO:0007669"/>
    <property type="project" value="UniProtKB-KW"/>
</dbReference>
<dbReference type="GO" id="GO:0003700">
    <property type="term" value="F:DNA-binding transcription factor activity"/>
    <property type="evidence" value="ECO:0000250"/>
    <property type="project" value="TAIR"/>
</dbReference>
<dbReference type="GO" id="GO:0009873">
    <property type="term" value="P:ethylene-activated signaling pathway"/>
    <property type="evidence" value="ECO:0007669"/>
    <property type="project" value="UniProtKB-KW"/>
</dbReference>
<dbReference type="CDD" id="cd00018">
    <property type="entry name" value="AP2"/>
    <property type="match status" value="1"/>
</dbReference>
<dbReference type="Gene3D" id="3.30.730.10">
    <property type="entry name" value="AP2/ERF domain"/>
    <property type="match status" value="1"/>
</dbReference>
<dbReference type="InterPro" id="IPR001471">
    <property type="entry name" value="AP2/ERF_dom"/>
</dbReference>
<dbReference type="InterPro" id="IPR036955">
    <property type="entry name" value="AP2/ERF_dom_sf"/>
</dbReference>
<dbReference type="InterPro" id="IPR050913">
    <property type="entry name" value="AP2/ERF_ERF_subfamily"/>
</dbReference>
<dbReference type="InterPro" id="IPR016177">
    <property type="entry name" value="DNA-bd_dom_sf"/>
</dbReference>
<dbReference type="PANTHER" id="PTHR31194:SF222">
    <property type="entry name" value="ETHYLENE-RESPONSIVE TRANSCRIPTION FACTOR ERF120-RELATED"/>
    <property type="match status" value="1"/>
</dbReference>
<dbReference type="PANTHER" id="PTHR31194">
    <property type="entry name" value="SHN SHINE , DNA BINDING / TRANSCRIPTION FACTOR"/>
    <property type="match status" value="1"/>
</dbReference>
<dbReference type="PRINTS" id="PR00367">
    <property type="entry name" value="ETHRSPELEMNT"/>
</dbReference>
<dbReference type="SMART" id="SM00380">
    <property type="entry name" value="AP2"/>
    <property type="match status" value="1"/>
</dbReference>
<dbReference type="SUPFAM" id="SSF54171">
    <property type="entry name" value="DNA-binding domain"/>
    <property type="match status" value="1"/>
</dbReference>
<dbReference type="PROSITE" id="PS51032">
    <property type="entry name" value="AP2_ERF"/>
    <property type="match status" value="1"/>
</dbReference>
<accession>Q38Q40</accession>
<accession>Q9FGD0</accession>
<organism>
    <name type="scientific">Arabidopsis thaliana</name>
    <name type="common">Mouse-ear cress</name>
    <dbReference type="NCBI Taxonomy" id="3702"/>
    <lineage>
        <taxon>Eukaryota</taxon>
        <taxon>Viridiplantae</taxon>
        <taxon>Streptophyta</taxon>
        <taxon>Embryophyta</taxon>
        <taxon>Tracheophyta</taxon>
        <taxon>Spermatophyta</taxon>
        <taxon>Magnoliopsida</taxon>
        <taxon>eudicotyledons</taxon>
        <taxon>Gunneridae</taxon>
        <taxon>Pentapetalae</taxon>
        <taxon>rosids</taxon>
        <taxon>malvids</taxon>
        <taxon>Brassicales</taxon>
        <taxon>Brassicaceae</taxon>
        <taxon>Camelineae</taxon>
        <taxon>Arabidopsis</taxon>
    </lineage>
</organism>
<reference key="1">
    <citation type="journal article" date="2005" name="Plant Mol. Biol.">
        <title>An annotation update via cDNA sequence analysis and comprehensive profiling of developmental, hormonal or environmental responsiveness of the Arabidopsis AP2/EREBP transcription factor gene family.</title>
        <authorList>
            <person name="Feng J.-X."/>
            <person name="Liu D."/>
            <person name="Pan Y."/>
            <person name="Gong W."/>
            <person name="Ma L.-G."/>
            <person name="Luo J.-C."/>
            <person name="Deng X.-W."/>
            <person name="Zhu Y.-X."/>
        </authorList>
    </citation>
    <scope>NUCLEOTIDE SEQUENCE [MRNA]</scope>
    <source>
        <strain>cv. Columbia</strain>
    </source>
</reference>
<reference key="2">
    <citation type="submission" date="1999-04" db="EMBL/GenBank/DDBJ databases">
        <title>Structural analysis of Arabidopsis thaliana chromosome 5. XI.</title>
        <authorList>
            <person name="Kaneko T."/>
            <person name="Katoh T."/>
            <person name="Asamizu E."/>
            <person name="Sato S."/>
            <person name="Nakamura Y."/>
            <person name="Kotani H."/>
            <person name="Tabata S."/>
        </authorList>
    </citation>
    <scope>NUCLEOTIDE SEQUENCE [LARGE SCALE GENOMIC DNA]</scope>
    <source>
        <strain>cv. Columbia</strain>
    </source>
</reference>
<reference key="3">
    <citation type="journal article" date="2017" name="Plant J.">
        <title>Araport11: a complete reannotation of the Arabidopsis thaliana reference genome.</title>
        <authorList>
            <person name="Cheng C.Y."/>
            <person name="Krishnakumar V."/>
            <person name="Chan A.P."/>
            <person name="Thibaud-Nissen F."/>
            <person name="Schobel S."/>
            <person name="Town C.D."/>
        </authorList>
    </citation>
    <scope>GENOME REANNOTATION</scope>
    <source>
        <strain>cv. Columbia</strain>
    </source>
</reference>
<reference key="4">
    <citation type="submission" date="2004-02" db="EMBL/GenBank/DDBJ databases">
        <title>Molecular cloning, expression, phylogenetic and functional characterization of the Arabidopsis AP2/EREBP transcription factor family.</title>
        <authorList>
            <person name="Pan Y."/>
            <person name="Gong W."/>
            <person name="Liu D."/>
            <person name="Fu Q."/>
            <person name="Mei W.-Q."/>
            <person name="Song W.-Q."/>
            <person name="Ma L.-G."/>
            <person name="Luo J.-C."/>
            <person name="Deng X.-W."/>
            <person name="Zhu Y.-X."/>
        </authorList>
    </citation>
    <scope>NUCLEOTIDE SEQUENCE [MRNA] OF 25-184</scope>
</reference>
<reference key="5">
    <citation type="submission" date="2006-02" db="EMBL/GenBank/DDBJ databases">
        <title>Arabidopsis ORF clones.</title>
        <authorList>
            <person name="Kim C.J."/>
            <person name="Chen H."/>
            <person name="Shinn P."/>
            <person name="Ecker J.R."/>
        </authorList>
    </citation>
    <scope>NUCLEOTIDE SEQUENCE [LARGE SCALE MRNA] OF 25-184</scope>
    <source>
        <strain>cv. Columbia</strain>
    </source>
</reference>
<reference key="6">
    <citation type="journal article" date="2006" name="Plant Physiol.">
        <title>Genome-wide analysis of the ERF gene family in Arabidopsis and rice.</title>
        <authorList>
            <person name="Nakano T."/>
            <person name="Suzuki K."/>
            <person name="Fujimura T."/>
            <person name="Shinshi H."/>
        </authorList>
    </citation>
    <scope>GENE FAMILY</scope>
    <scope>NOMENCLATURE</scope>
</reference>
<feature type="chain" id="PRO_0000297926" description="Ethylene-responsive transcription factor ERF122">
    <location>
        <begin position="1"/>
        <end position="184"/>
    </location>
</feature>
<feature type="DNA-binding region" description="AP2/ERF" evidence="2">
    <location>
        <begin position="120"/>
        <end position="177"/>
    </location>
</feature>
<comment type="function">
    <text evidence="1">Probably acts as a transcriptional activator. Binds to the GCC-box pathogenesis-related promoter element. May be involved in the regulation of gene expression by stress factors and by components of stress signal transduction pathways (By similarity).</text>
</comment>
<comment type="interaction">
    <interactant intactId="EBI-25514205">
        <id>Q38Q40</id>
    </interactant>
    <interactant intactId="EBI-1238472">
        <id>Q9S7H5</id>
        <label>SCL21</label>
    </interactant>
    <organismsDiffer>false</organismsDiffer>
    <experiments>3</experiments>
</comment>
<comment type="interaction">
    <interactant intactId="EBI-25514205">
        <id>Q38Q40</id>
    </interactant>
    <interactant intactId="EBI-15395779">
        <id>Q8H125</id>
        <label>SCL5</label>
    </interactant>
    <organismsDiffer>false</organismsDiffer>
    <experiments>3</experiments>
</comment>
<comment type="subcellular location">
    <subcellularLocation>
        <location evidence="3">Nucleus</location>
    </subcellularLocation>
</comment>
<comment type="similarity">
    <text evidence="3">Belongs to the AP2/ERF transcription factor family. ERF subfamily.</text>
</comment>
<comment type="sequence caution" evidence="3">
    <conflict type="erroneous initiation">
        <sequence resource="EMBL-CDS" id="BAB08939"/>
    </conflict>
</comment>
<sequence>MLTPFCSSHHLQEKMNSCQSNPTKMDNSENVLFNDQNENFTLVAPHPSSSYLTRDQEHEIMVSALRQVISNSGADDASSSNLIITSVPPPDAGPCPLCGVAGCYGCTLQRPHREVKKEKKYKGVRKKPSGKWAAEIWDPRSKSRRWLGTFLTAEMAAQSYNDAAAEYRARRGKTNGEGIKRRWR</sequence>
<name>EF122_ARATH</name>
<evidence type="ECO:0000250" key="1"/>
<evidence type="ECO:0000255" key="2">
    <source>
        <dbReference type="PROSITE-ProRule" id="PRU00366"/>
    </source>
</evidence>
<evidence type="ECO:0000305" key="3"/>
<gene>
    <name type="primary">ERF122</name>
    <name type="ordered locus">At5g67000</name>
    <name type="ORF">K8A10.7</name>
</gene>
<keyword id="KW-0010">Activator</keyword>
<keyword id="KW-0238">DNA-binding</keyword>
<keyword id="KW-0936">Ethylene signaling pathway</keyword>
<keyword id="KW-0539">Nucleus</keyword>
<keyword id="KW-1185">Reference proteome</keyword>
<keyword id="KW-0804">Transcription</keyword>
<keyword id="KW-0805">Transcription regulation</keyword>